<feature type="chain" id="PRO_1000144196" description="Large ribosomal subunit protein uL13">
    <location>
        <begin position="1"/>
        <end position="152"/>
    </location>
</feature>
<name>RL13_WOLPP</name>
<dbReference type="EMBL" id="AM999887">
    <property type="protein sequence ID" value="CAQ54718.1"/>
    <property type="molecule type" value="Genomic_DNA"/>
</dbReference>
<dbReference type="RefSeq" id="WP_006014941.1">
    <property type="nucleotide sequence ID" value="NC_010981.1"/>
</dbReference>
<dbReference type="SMR" id="B3CLF0"/>
<dbReference type="KEGG" id="wpi:WP0610"/>
<dbReference type="eggNOG" id="COG0102">
    <property type="taxonomic scope" value="Bacteria"/>
</dbReference>
<dbReference type="HOGENOM" id="CLU_082184_2_2_5"/>
<dbReference type="Proteomes" id="UP000008814">
    <property type="component" value="Chromosome"/>
</dbReference>
<dbReference type="GO" id="GO:0022625">
    <property type="term" value="C:cytosolic large ribosomal subunit"/>
    <property type="evidence" value="ECO:0007669"/>
    <property type="project" value="TreeGrafter"/>
</dbReference>
<dbReference type="GO" id="GO:0003729">
    <property type="term" value="F:mRNA binding"/>
    <property type="evidence" value="ECO:0007669"/>
    <property type="project" value="TreeGrafter"/>
</dbReference>
<dbReference type="GO" id="GO:0003735">
    <property type="term" value="F:structural constituent of ribosome"/>
    <property type="evidence" value="ECO:0007669"/>
    <property type="project" value="InterPro"/>
</dbReference>
<dbReference type="GO" id="GO:0017148">
    <property type="term" value="P:negative regulation of translation"/>
    <property type="evidence" value="ECO:0007669"/>
    <property type="project" value="TreeGrafter"/>
</dbReference>
<dbReference type="GO" id="GO:0006412">
    <property type="term" value="P:translation"/>
    <property type="evidence" value="ECO:0007669"/>
    <property type="project" value="UniProtKB-UniRule"/>
</dbReference>
<dbReference type="CDD" id="cd00392">
    <property type="entry name" value="Ribosomal_L13"/>
    <property type="match status" value="1"/>
</dbReference>
<dbReference type="FunFam" id="3.90.1180.10:FF:000001">
    <property type="entry name" value="50S ribosomal protein L13"/>
    <property type="match status" value="1"/>
</dbReference>
<dbReference type="Gene3D" id="3.90.1180.10">
    <property type="entry name" value="Ribosomal protein L13"/>
    <property type="match status" value="1"/>
</dbReference>
<dbReference type="HAMAP" id="MF_01366">
    <property type="entry name" value="Ribosomal_uL13"/>
    <property type="match status" value="1"/>
</dbReference>
<dbReference type="InterPro" id="IPR005822">
    <property type="entry name" value="Ribosomal_uL13"/>
</dbReference>
<dbReference type="InterPro" id="IPR005823">
    <property type="entry name" value="Ribosomal_uL13_bac-type"/>
</dbReference>
<dbReference type="InterPro" id="IPR036899">
    <property type="entry name" value="Ribosomal_uL13_sf"/>
</dbReference>
<dbReference type="NCBIfam" id="TIGR01066">
    <property type="entry name" value="rplM_bact"/>
    <property type="match status" value="1"/>
</dbReference>
<dbReference type="PANTHER" id="PTHR11545:SF2">
    <property type="entry name" value="LARGE RIBOSOMAL SUBUNIT PROTEIN UL13M"/>
    <property type="match status" value="1"/>
</dbReference>
<dbReference type="PANTHER" id="PTHR11545">
    <property type="entry name" value="RIBOSOMAL PROTEIN L13"/>
    <property type="match status" value="1"/>
</dbReference>
<dbReference type="Pfam" id="PF00572">
    <property type="entry name" value="Ribosomal_L13"/>
    <property type="match status" value="1"/>
</dbReference>
<dbReference type="PIRSF" id="PIRSF002181">
    <property type="entry name" value="Ribosomal_L13"/>
    <property type="match status" value="1"/>
</dbReference>
<dbReference type="SUPFAM" id="SSF52161">
    <property type="entry name" value="Ribosomal protein L13"/>
    <property type="match status" value="1"/>
</dbReference>
<accession>B3CLF0</accession>
<reference key="1">
    <citation type="journal article" date="2008" name="Mol. Biol. Evol.">
        <title>Genome evolution of Wolbachia strain wPip from the Culex pipiens group.</title>
        <authorList>
            <person name="Klasson L."/>
            <person name="Walker T."/>
            <person name="Sebaihia M."/>
            <person name="Sanders M.J."/>
            <person name="Quail M.A."/>
            <person name="Lord A."/>
            <person name="Sanders S."/>
            <person name="Earl J."/>
            <person name="O'Neill S.L."/>
            <person name="Thomson N."/>
            <person name="Sinkins S.P."/>
            <person name="Parkhill J."/>
        </authorList>
    </citation>
    <scope>NUCLEOTIDE SEQUENCE [LARGE SCALE GENOMIC DNA]</scope>
    <source>
        <strain>wPip</strain>
    </source>
</reference>
<gene>
    <name evidence="1" type="primary">rplM</name>
    <name type="ordered locus">WP0610</name>
</gene>
<comment type="function">
    <text evidence="1">This protein is one of the early assembly proteins of the 50S ribosomal subunit, although it is not seen to bind rRNA by itself. It is important during the early stages of 50S assembly.</text>
</comment>
<comment type="subunit">
    <text evidence="1">Part of the 50S ribosomal subunit.</text>
</comment>
<comment type="similarity">
    <text evidence="1">Belongs to the universal ribosomal protein uL13 family.</text>
</comment>
<proteinExistence type="inferred from homology"/>
<keyword id="KW-0687">Ribonucleoprotein</keyword>
<keyword id="KW-0689">Ribosomal protein</keyword>
<evidence type="ECO:0000255" key="1">
    <source>
        <dbReference type="HAMAP-Rule" id="MF_01366"/>
    </source>
</evidence>
<evidence type="ECO:0000305" key="2"/>
<organism>
    <name type="scientific">Wolbachia pipientis subsp. Culex pipiens (strain wPip)</name>
    <dbReference type="NCBI Taxonomy" id="570417"/>
    <lineage>
        <taxon>Bacteria</taxon>
        <taxon>Pseudomonadati</taxon>
        <taxon>Pseudomonadota</taxon>
        <taxon>Alphaproteobacteria</taxon>
        <taxon>Rickettsiales</taxon>
        <taxon>Anaplasmataceae</taxon>
        <taxon>Wolbachieae</taxon>
        <taxon>Wolbachia</taxon>
    </lineage>
</organism>
<protein>
    <recommendedName>
        <fullName evidence="1">Large ribosomal subunit protein uL13</fullName>
    </recommendedName>
    <alternativeName>
        <fullName evidence="2">50S ribosomal protein L13</fullName>
    </alternativeName>
</protein>
<sequence length="152" mass="17503">MKTFFLKEKQVDKKWLVIDAEGLVVGRLAAFVAALLRGKHKPEYTPHMDCGDNVIIVNAEKVHFTGKKLKDKIYYRHTGYSGGLKKTTPDNILNGKFPERVIKMAVKRMLDDGPMARRRFENLYVYSGSEHKHQGQQPEKIDFASLNRKNKK</sequence>